<feature type="chain" id="PRO_0000362398" description="ATP synthase subunit a">
    <location>
        <begin position="1"/>
        <end position="289"/>
    </location>
</feature>
<feature type="transmembrane region" description="Helical" evidence="1">
    <location>
        <begin position="43"/>
        <end position="63"/>
    </location>
</feature>
<feature type="transmembrane region" description="Helical" evidence="1">
    <location>
        <begin position="104"/>
        <end position="124"/>
    </location>
</feature>
<feature type="transmembrane region" description="Helical" evidence="1">
    <location>
        <begin position="160"/>
        <end position="180"/>
    </location>
</feature>
<feature type="transmembrane region" description="Helical" evidence="1">
    <location>
        <begin position="193"/>
        <end position="213"/>
    </location>
</feature>
<feature type="transmembrane region" description="Helical" evidence="1">
    <location>
        <begin position="232"/>
        <end position="252"/>
    </location>
</feature>
<feature type="transmembrane region" description="Helical" evidence="1">
    <location>
        <begin position="259"/>
        <end position="279"/>
    </location>
</feature>
<evidence type="ECO:0000255" key="1">
    <source>
        <dbReference type="HAMAP-Rule" id="MF_01393"/>
    </source>
</evidence>
<protein>
    <recommendedName>
        <fullName evidence="1">ATP synthase subunit a</fullName>
    </recommendedName>
    <alternativeName>
        <fullName evidence="1">ATP synthase F0 sector subunit a</fullName>
    </alternativeName>
    <alternativeName>
        <fullName evidence="1">F-ATPase subunit 6</fullName>
    </alternativeName>
</protein>
<accession>Q88BW8</accession>
<gene>
    <name evidence="1" type="primary">atpB</name>
    <name type="ordered locus">PP_5419</name>
</gene>
<reference key="1">
    <citation type="journal article" date="2002" name="Environ. Microbiol.">
        <title>Complete genome sequence and comparative analysis of the metabolically versatile Pseudomonas putida KT2440.</title>
        <authorList>
            <person name="Nelson K.E."/>
            <person name="Weinel C."/>
            <person name="Paulsen I.T."/>
            <person name="Dodson R.J."/>
            <person name="Hilbert H."/>
            <person name="Martins dos Santos V.A.P."/>
            <person name="Fouts D.E."/>
            <person name="Gill S.R."/>
            <person name="Pop M."/>
            <person name="Holmes M."/>
            <person name="Brinkac L.M."/>
            <person name="Beanan M.J."/>
            <person name="DeBoy R.T."/>
            <person name="Daugherty S.C."/>
            <person name="Kolonay J.F."/>
            <person name="Madupu R."/>
            <person name="Nelson W.C."/>
            <person name="White O."/>
            <person name="Peterson J.D."/>
            <person name="Khouri H.M."/>
            <person name="Hance I."/>
            <person name="Chris Lee P."/>
            <person name="Holtzapple E.K."/>
            <person name="Scanlan D."/>
            <person name="Tran K."/>
            <person name="Moazzez A."/>
            <person name="Utterback T.R."/>
            <person name="Rizzo M."/>
            <person name="Lee K."/>
            <person name="Kosack D."/>
            <person name="Moestl D."/>
            <person name="Wedler H."/>
            <person name="Lauber J."/>
            <person name="Stjepandic D."/>
            <person name="Hoheisel J."/>
            <person name="Straetz M."/>
            <person name="Heim S."/>
            <person name="Kiewitz C."/>
            <person name="Eisen J.A."/>
            <person name="Timmis K.N."/>
            <person name="Duesterhoeft A."/>
            <person name="Tuemmler B."/>
            <person name="Fraser C.M."/>
        </authorList>
    </citation>
    <scope>NUCLEOTIDE SEQUENCE [LARGE SCALE GENOMIC DNA]</scope>
    <source>
        <strain>ATCC 47054 / DSM 6125 / CFBP 8728 / NCIMB 11950 / KT2440</strain>
    </source>
</reference>
<dbReference type="EMBL" id="AE015451">
    <property type="protein sequence ID" value="AAN70983.1"/>
    <property type="molecule type" value="Genomic_DNA"/>
</dbReference>
<dbReference type="RefSeq" id="NP_747519.1">
    <property type="nucleotide sequence ID" value="NC_002947.4"/>
</dbReference>
<dbReference type="RefSeq" id="WP_010955889.1">
    <property type="nucleotide sequence ID" value="NZ_CP169744.1"/>
</dbReference>
<dbReference type="SMR" id="Q88BW8"/>
<dbReference type="STRING" id="160488.PP_5419"/>
<dbReference type="PaxDb" id="160488-PP_5419"/>
<dbReference type="GeneID" id="83683232"/>
<dbReference type="KEGG" id="ppu:PP_5419"/>
<dbReference type="PATRIC" id="fig|160488.4.peg.5787"/>
<dbReference type="eggNOG" id="COG0356">
    <property type="taxonomic scope" value="Bacteria"/>
</dbReference>
<dbReference type="HOGENOM" id="CLU_041018_1_0_6"/>
<dbReference type="OrthoDB" id="9789241at2"/>
<dbReference type="PhylomeDB" id="Q88BW8"/>
<dbReference type="BioCyc" id="PPUT160488:G1G01-5785-MONOMER"/>
<dbReference type="Proteomes" id="UP000000556">
    <property type="component" value="Chromosome"/>
</dbReference>
<dbReference type="GO" id="GO:0005886">
    <property type="term" value="C:plasma membrane"/>
    <property type="evidence" value="ECO:0007669"/>
    <property type="project" value="UniProtKB-SubCell"/>
</dbReference>
<dbReference type="GO" id="GO:0045259">
    <property type="term" value="C:proton-transporting ATP synthase complex"/>
    <property type="evidence" value="ECO:0007669"/>
    <property type="project" value="UniProtKB-KW"/>
</dbReference>
<dbReference type="GO" id="GO:0046933">
    <property type="term" value="F:proton-transporting ATP synthase activity, rotational mechanism"/>
    <property type="evidence" value="ECO:0007669"/>
    <property type="project" value="UniProtKB-UniRule"/>
</dbReference>
<dbReference type="GO" id="GO:0042777">
    <property type="term" value="P:proton motive force-driven plasma membrane ATP synthesis"/>
    <property type="evidence" value="ECO:0007669"/>
    <property type="project" value="TreeGrafter"/>
</dbReference>
<dbReference type="CDD" id="cd00310">
    <property type="entry name" value="ATP-synt_Fo_a_6"/>
    <property type="match status" value="1"/>
</dbReference>
<dbReference type="FunFam" id="1.20.120.220:FF:000002">
    <property type="entry name" value="ATP synthase subunit a"/>
    <property type="match status" value="1"/>
</dbReference>
<dbReference type="Gene3D" id="1.20.120.220">
    <property type="entry name" value="ATP synthase, F0 complex, subunit A"/>
    <property type="match status" value="1"/>
</dbReference>
<dbReference type="HAMAP" id="MF_01393">
    <property type="entry name" value="ATP_synth_a_bact"/>
    <property type="match status" value="1"/>
</dbReference>
<dbReference type="InterPro" id="IPR045082">
    <property type="entry name" value="ATP_syn_F0_a_bact/chloroplast"/>
</dbReference>
<dbReference type="InterPro" id="IPR000568">
    <property type="entry name" value="ATP_synth_F0_asu"/>
</dbReference>
<dbReference type="InterPro" id="IPR023011">
    <property type="entry name" value="ATP_synth_F0_asu_AS"/>
</dbReference>
<dbReference type="InterPro" id="IPR035908">
    <property type="entry name" value="F0_ATP_A_sf"/>
</dbReference>
<dbReference type="NCBIfam" id="TIGR01131">
    <property type="entry name" value="ATP_synt_6_or_A"/>
    <property type="match status" value="1"/>
</dbReference>
<dbReference type="NCBIfam" id="NF004477">
    <property type="entry name" value="PRK05815.1-1"/>
    <property type="match status" value="1"/>
</dbReference>
<dbReference type="PANTHER" id="PTHR42823">
    <property type="entry name" value="ATP SYNTHASE SUBUNIT A, CHLOROPLASTIC"/>
    <property type="match status" value="1"/>
</dbReference>
<dbReference type="PANTHER" id="PTHR42823:SF3">
    <property type="entry name" value="ATP SYNTHASE SUBUNIT A, CHLOROPLASTIC"/>
    <property type="match status" value="1"/>
</dbReference>
<dbReference type="Pfam" id="PF00119">
    <property type="entry name" value="ATP-synt_A"/>
    <property type="match status" value="1"/>
</dbReference>
<dbReference type="SUPFAM" id="SSF81336">
    <property type="entry name" value="F1F0 ATP synthase subunit A"/>
    <property type="match status" value="1"/>
</dbReference>
<dbReference type="PROSITE" id="PS00449">
    <property type="entry name" value="ATPASE_A"/>
    <property type="match status" value="1"/>
</dbReference>
<proteinExistence type="inferred from homology"/>
<keyword id="KW-0066">ATP synthesis</keyword>
<keyword id="KW-0997">Cell inner membrane</keyword>
<keyword id="KW-1003">Cell membrane</keyword>
<keyword id="KW-0138">CF(0)</keyword>
<keyword id="KW-0375">Hydrogen ion transport</keyword>
<keyword id="KW-0406">Ion transport</keyword>
<keyword id="KW-0472">Membrane</keyword>
<keyword id="KW-1185">Reference proteome</keyword>
<keyword id="KW-0812">Transmembrane</keyword>
<keyword id="KW-1133">Transmembrane helix</keyword>
<keyword id="KW-0813">Transport</keyword>
<sequence>MAAETASGYIQHHLQNLTYGQLPDGSWGFAHSAAEAKAMGFWAFHLDTLGWSVALGLIFLLIFRMAAKKATSGQPGGLQNFVEVMVDFVNGSVKDSFHGRSPVIAPLALTIFVWVFLMNAVDLIPVDWIPQLAILISGDPHIPFRAVSTTDPNATLAMAFCVFALIIFYSIKVKGLGGFIGELTLHPFGSKNIFVQILLIPVNFLLEFVTLIAKPISLALRLFGNMYAGELVFILIAVMFGSGLLWLSGLGVVLQWAWAVFHILIITLQAFIFMMLTIVYLSMAHEDNH</sequence>
<comment type="function">
    <text evidence="1">Key component of the proton channel; it plays a direct role in the translocation of protons across the membrane.</text>
</comment>
<comment type="subunit">
    <text evidence="1">F-type ATPases have 2 components, CF(1) - the catalytic core - and CF(0) - the membrane proton channel. CF(1) has five subunits: alpha(3), beta(3), gamma(1), delta(1), epsilon(1). CF(0) has three main subunits: a(1), b(2) and c(9-12). The alpha and beta chains form an alternating ring which encloses part of the gamma chain. CF(1) is attached to CF(0) by a central stalk formed by the gamma and epsilon chains, while a peripheral stalk is formed by the delta and b chains.</text>
</comment>
<comment type="subcellular location">
    <subcellularLocation>
        <location evidence="1">Cell inner membrane</location>
        <topology evidence="1">Multi-pass membrane protein</topology>
    </subcellularLocation>
</comment>
<comment type="similarity">
    <text evidence="1">Belongs to the ATPase A chain family.</text>
</comment>
<organism>
    <name type="scientific">Pseudomonas putida (strain ATCC 47054 / DSM 6125 / CFBP 8728 / NCIMB 11950 / KT2440)</name>
    <dbReference type="NCBI Taxonomy" id="160488"/>
    <lineage>
        <taxon>Bacteria</taxon>
        <taxon>Pseudomonadati</taxon>
        <taxon>Pseudomonadota</taxon>
        <taxon>Gammaproteobacteria</taxon>
        <taxon>Pseudomonadales</taxon>
        <taxon>Pseudomonadaceae</taxon>
        <taxon>Pseudomonas</taxon>
    </lineage>
</organism>
<name>ATP6_PSEPK</name>